<organism>
    <name type="scientific">Homo sapiens</name>
    <name type="common">Human</name>
    <dbReference type="NCBI Taxonomy" id="9606"/>
    <lineage>
        <taxon>Eukaryota</taxon>
        <taxon>Metazoa</taxon>
        <taxon>Chordata</taxon>
        <taxon>Craniata</taxon>
        <taxon>Vertebrata</taxon>
        <taxon>Euteleostomi</taxon>
        <taxon>Mammalia</taxon>
        <taxon>Eutheria</taxon>
        <taxon>Euarchontoglires</taxon>
        <taxon>Primates</taxon>
        <taxon>Haplorrhini</taxon>
        <taxon>Catarrhini</taxon>
        <taxon>Hominidae</taxon>
        <taxon>Homo</taxon>
    </lineage>
</organism>
<name>ELF4_HUMAN</name>
<proteinExistence type="evidence at protein level"/>
<evidence type="ECO:0000250" key="1"/>
<evidence type="ECO:0000255" key="2"/>
<evidence type="ECO:0000255" key="3">
    <source>
        <dbReference type="PROSITE-ProRule" id="PRU00237"/>
    </source>
</evidence>
<evidence type="ECO:0000256" key="4">
    <source>
        <dbReference type="SAM" id="MobiDB-lite"/>
    </source>
</evidence>
<evidence type="ECO:0000269" key="5">
    <source>
    </source>
</evidence>
<evidence type="ECO:0000269" key="6">
    <source>
    </source>
</evidence>
<evidence type="ECO:0000269" key="7">
    <source>
    </source>
</evidence>
<evidence type="ECO:0000269" key="8">
    <source>
    </source>
</evidence>
<evidence type="ECO:0000269" key="9">
    <source>
    </source>
</evidence>
<evidence type="ECO:0000269" key="10">
    <source>
    </source>
</evidence>
<evidence type="ECO:0000269" key="11">
    <source>
    </source>
</evidence>
<evidence type="ECO:0000269" key="12">
    <source>
    </source>
</evidence>
<evidence type="ECO:0000269" key="13">
    <source>
    </source>
</evidence>
<evidence type="ECO:0000305" key="14"/>
<evidence type="ECO:0000312" key="15">
    <source>
        <dbReference type="EMBL" id="AAB53693.1"/>
    </source>
</evidence>
<evidence type="ECO:0000312" key="16">
    <source>
        <dbReference type="EMBL" id="AAC17452.1"/>
    </source>
</evidence>
<evidence type="ECO:0000312" key="17">
    <source>
        <dbReference type="EMBL" id="AAH17194.1"/>
    </source>
</evidence>
<evidence type="ECO:0000312" key="18">
    <source>
        <dbReference type="EMBL" id="CAI42882.1"/>
    </source>
</evidence>
<evidence type="ECO:0007744" key="19">
    <source>
    </source>
</evidence>
<evidence type="ECO:0007744" key="20">
    <source>
    </source>
</evidence>
<evidence type="ECO:0007744" key="21">
    <source>
    </source>
</evidence>
<evidence type="ECO:0007744" key="22">
    <source>
    </source>
</evidence>
<sequence>MAITLQPSDLIFEFASNGMDDDIHQLEDPSVFPAVIVEQVPYPDLLHLYSGLELDDVHNGIITDGTLCMTQDQILEGSFLLTDDNEATSHTMSTAEVLLNMESPSDILDEKQIFSTSEMLPDSDPAPAVTLPNYLFPASEPDALNRAGDTSDQEGHSLEEKASREESAKKTGKSKKRIRKTKGNRSTSPVTDPSIPIRKKSKDGKGSTIYLWEFLLALLQDRNTCPKYIKWTQREKGIFKLVDSKAVSKLWGKQKNKPDMNYETMGRALRYYYQRGILAKVEGQRLVYQFKEMPKDLVVIEDEDESSEATAAPPQASTASVASASTTRRTSSRVSSRSAPQGKGSSSWEKPKIQHVGLQPSASLELGPSLDEEIPTTSTMLVSPAEGQVKLTKAVSASSVPSNIHLGVAPVGSGSALTLQTIPLTTVLTNGPPASTTAPTQLVLQSVPAASTFKDTFTLQASFPLNASFQDSQVAAPGAPLILSGLPQLLAGANRPTNPAPPTVTGAGPAGPSSQPPGTVIAAFIRTSGTTAAPRVKEGPLRSSSYVQGMVTGAPMEGLLVPEETLRELLRDQAHLQPLPTQVVSRGSHNPSLLGNQTLSPPSRPTVGLTPVAELELSSGSGSLLMAEPSVTTSGSLLTRSPTPAPFSPFNPTSLIKMEPHDI</sequence>
<accession>Q99607</accession>
<accession>D3DTG1</accession>
<accession>O60435</accession>
<feature type="chain" id="PRO_0000204089" description="ETS-related transcription factor Elf-4">
    <location>
        <begin position="1"/>
        <end position="663"/>
    </location>
</feature>
<feature type="DNA-binding region" description="ETS" evidence="3">
    <location>
        <begin position="209"/>
        <end position="291"/>
    </location>
</feature>
<feature type="region of interest" description="RUNX1-binding" evidence="5">
    <location>
        <begin position="87"/>
        <end position="206"/>
    </location>
</feature>
<feature type="region of interest" description="Disordered" evidence="4">
    <location>
        <begin position="140"/>
        <end position="203"/>
    </location>
</feature>
<feature type="region of interest" description="Disordered" evidence="4">
    <location>
        <begin position="302"/>
        <end position="353"/>
    </location>
</feature>
<feature type="region of interest" description="Disordered" evidence="4">
    <location>
        <begin position="493"/>
        <end position="518"/>
    </location>
</feature>
<feature type="region of interest" description="Disordered" evidence="4">
    <location>
        <begin position="582"/>
        <end position="605"/>
    </location>
</feature>
<feature type="region of interest" description="Disordered" evidence="4">
    <location>
        <begin position="635"/>
        <end position="663"/>
    </location>
</feature>
<feature type="compositionally biased region" description="Basic and acidic residues" evidence="4">
    <location>
        <begin position="153"/>
        <end position="169"/>
    </location>
</feature>
<feature type="compositionally biased region" description="Basic residues" evidence="4">
    <location>
        <begin position="170"/>
        <end position="183"/>
    </location>
</feature>
<feature type="compositionally biased region" description="Low complexity" evidence="4">
    <location>
        <begin position="308"/>
        <end position="341"/>
    </location>
</feature>
<feature type="compositionally biased region" description="Low complexity" evidence="4">
    <location>
        <begin position="503"/>
        <end position="518"/>
    </location>
</feature>
<feature type="compositionally biased region" description="Polar residues" evidence="4">
    <location>
        <begin position="582"/>
        <end position="601"/>
    </location>
</feature>
<feature type="site" description="Breakpoint for translocation to form ELF4-ERG oncogene">
    <location>
        <begin position="25"/>
        <end position="26"/>
    </location>
</feature>
<feature type="modified residue" description="Phosphoserine" evidence="19 22">
    <location>
        <position position="151"/>
    </location>
</feature>
<feature type="modified residue" description="Phosphoserine" evidence="22">
    <location>
        <position position="188"/>
    </location>
</feature>
<feature type="modified residue" description="Phosphoserine" evidence="22">
    <location>
        <position position="641"/>
    </location>
</feature>
<feature type="modified residue" description="Phosphoserine" evidence="19 20 21">
    <location>
        <position position="648"/>
    </location>
</feature>
<feature type="sequence variant" id="VAR_087047" description="No effect on transcriptional activity shown in IFNB1 promoter-driven luciferase assay; dbSNP:rs147410657." evidence="10">
    <original>A</original>
    <variation>T</variation>
    <location>
        <position position="95"/>
    </location>
</feature>
<feature type="sequence variant" id="VAR_087048" description="No effect on transcriptional activity shown in IFNB1 promoter-driven luciferase assay; dbSNP:rs150084985." evidence="10">
    <original>A</original>
    <variation>V</variation>
    <location>
        <position position="147"/>
    </location>
</feature>
<feature type="sequence variant" id="VAR_087049" description="No effect on transcriptional activity shown in IFNB1 promoter-driven luciferase assay; dbSNP:rs747352505." evidence="10">
    <original>R</original>
    <variation>K</variation>
    <location>
        <position position="177"/>
    </location>
</feature>
<feature type="sequence variant" id="VAR_087050" description="No effect on transcriptional activity shown in IFNB1 promoter-driven luciferase assay; dbSNP:rs137884184." evidence="10">
    <original>T</original>
    <variation>N</variation>
    <location>
        <position position="187"/>
    </location>
</feature>
<feature type="sequence variant" id="VAR_087051" description="In AIFBL2; loss of transcriptional activity shown in IFNB1 promoter-driven luciferase assay; decreased IFNB1 promoter binding; impaired binding to GPR35, GPR162 and PLCB2 promoters." evidence="11">
    <original>W</original>
    <variation>R</variation>
    <location>
        <position position="231"/>
    </location>
</feature>
<feature type="sequence variant" id="VAR_087052" description="In AIFBL2; elevated IL17A expression in patient colon biopsies; patient CD8+ T cells have reduced PRF1 expression when activated with IL-2 compared to CD8+ T cells from a healthy donor; severely decreased transcriptional activity shown in IFNB1 promoter-driven luciferase assay." evidence="10">
    <original>W</original>
    <variation>S</variation>
    <location>
        <position position="251"/>
    </location>
</feature>
<feature type="sequence variant" id="VAR_087053" description="No effect on transcriptional activity shown in IFNB1 promoter-driven luciferase assay; dbSNP:rs141440727." evidence="10">
    <original>S</original>
    <variation>T</variation>
    <location>
        <position position="345"/>
    </location>
</feature>
<feature type="sequence variant" id="VAR_087054" description="No effect on transcriptional activity shown in IFNB1 promoter-driven luciferase assay; dbSNP:rs576980542." evidence="10">
    <original>P</original>
    <variation>L</variation>
    <location>
        <position position="368"/>
    </location>
</feature>
<feature type="sequence variant" id="VAR_087055" description="No effect on transcriptional activity shown in IFNB1 promoter-driven luciferase assay; dbSNP:rs148953158." evidence="10">
    <original>V</original>
    <variation>I</variation>
    <location>
        <position position="382"/>
    </location>
</feature>
<feature type="sequence variant" id="VAR_087056" description="No effect on transcriptional activity shown in IFNB1 promoter-driven luciferase assay; dbSNP:rs199975202." evidence="10">
    <original>V</original>
    <variation>M</variation>
    <location>
        <position position="408"/>
    </location>
</feature>
<feature type="sequence variant" id="VAR_087057" description="No effect on transcriptional activity shown in IFNB1 promoter-driven luciferase assay; dbSNP:rs145786527." evidence="10">
    <original>V</original>
    <variation>M</variation>
    <location>
        <position position="411"/>
    </location>
</feature>
<feature type="sequence variant" id="VAR_087058" description="No effect on transcriptional activity shown in IFNB1 promoter-driven luciferase assay; dbSNP:rs145281864." evidence="10">
    <original>A</original>
    <variation>V</variation>
    <location>
        <position position="500"/>
    </location>
</feature>
<feature type="sequence variant" id="VAR_087059" description="No effect on transcriptional activity shown in IFNB1 promoter-driven luciferase assay; dbSNP:rs370055472." evidence="10">
    <original>P</original>
    <variation>L</variation>
    <location>
        <position position="512"/>
    </location>
</feature>
<feature type="sequence variant" id="VAR_087060" description="No effect on transcriptional activity shown in IFNB1 promoter-driven luciferase assay; dbSNP:rs141284451." evidence="10">
    <original>R</original>
    <variation>C</variation>
    <location>
        <position position="604"/>
    </location>
</feature>
<feature type="mutagenesis site" description="Loss of transcriptional activity shown in IFNB1 promoter-driven luciferase assay." evidence="11">
    <original>L</original>
    <variation>A</variation>
    <location>
        <position position="211"/>
    </location>
</feature>
<feature type="mutagenesis site" description="Loss of transcriptional activity shown in IFNB1 promoter-driven luciferase assay." evidence="11">
    <original>W</original>
    <variation>A</variation>
    <location>
        <position position="212"/>
    </location>
</feature>
<feature type="mutagenesis site" description="Loss of transcriptional activity shown in IFNB1 promoter-driven luciferase assay." evidence="11">
    <original>L</original>
    <variation>A</variation>
    <location>
        <position position="219"/>
    </location>
</feature>
<feature type="mutagenesis site" description="Loss of transcriptional activity shown in IFNB1 promoter-driven luciferase assay." evidence="11">
    <original>F</original>
    <variation>A</variation>
    <location>
        <position position="239"/>
    </location>
</feature>
<feature type="mutagenesis site" description="Loss of transcriptional activity shown in IFNB1 promoter-driven luciferase assay. Loss of INFB1 promoter binding. Does not bind GPR35, GPR162 and PLCB2 promoters." evidence="11">
    <original>W</original>
    <variation>A</variation>
    <location>
        <position position="251"/>
    </location>
</feature>
<feature type="mutagenesis site" description="Loss of transcriptional activity shown in IFNB1 promoter-driven luciferase assay." evidence="11">
    <original>G</original>
    <variation>A</variation>
    <location>
        <position position="252"/>
    </location>
</feature>
<feature type="mutagenesis site" description="Loss of transcriptional activity shown in IFNB1 promoter-driven luciferase assay." evidence="11">
    <original>K</original>
    <variation>A</variation>
    <location>
        <position position="255"/>
    </location>
</feature>
<feature type="mutagenesis site" description="Loss of transcriptional activity shown in IFNB1 promoter-driven luciferase assay." evidence="11">
    <original>M</original>
    <variation>A</variation>
    <location>
        <position position="260"/>
    </location>
</feature>
<feature type="sequence conflict" description="In Ref. 2; AAC17452." evidence="14" ref="2">
    <original>MP</original>
    <variation>IA</variation>
    <location>
        <begin position="293"/>
        <end position="294"/>
    </location>
</feature>
<feature type="sequence conflict" description="In Ref. 2; AAC17452." evidence="14" ref="2">
    <original>P</original>
    <variation>L</variation>
    <location>
        <position position="499"/>
    </location>
</feature>
<keyword id="KW-0010">Activator</keyword>
<keyword id="KW-0160">Chromosomal rearrangement</keyword>
<keyword id="KW-0225">Disease variant</keyword>
<keyword id="KW-0238">DNA-binding</keyword>
<keyword id="KW-0539">Nucleus</keyword>
<keyword id="KW-0597">Phosphoprotein</keyword>
<keyword id="KW-1267">Proteomics identification</keyword>
<keyword id="KW-0656">Proto-oncogene</keyword>
<keyword id="KW-1185">Reference proteome</keyword>
<keyword id="KW-0804">Transcription</keyword>
<keyword id="KW-0805">Transcription regulation</keyword>
<dbReference type="EMBL" id="U32645">
    <property type="protein sequence ID" value="AAB53693.1"/>
    <property type="molecule type" value="mRNA"/>
</dbReference>
<dbReference type="EMBL" id="AF000670">
    <property type="protein sequence ID" value="AAC17452.1"/>
    <property type="status" value="ALT_FRAME"/>
    <property type="molecule type" value="mRNA"/>
</dbReference>
<dbReference type="EMBL" id="AL136450">
    <property type="protein sequence ID" value="CAI42882.1"/>
    <property type="molecule type" value="Genomic_DNA"/>
</dbReference>
<dbReference type="EMBL" id="Z81363">
    <property type="protein sequence ID" value="CAI42882.1"/>
    <property type="status" value="JOINED"/>
    <property type="molecule type" value="Genomic_DNA"/>
</dbReference>
<dbReference type="EMBL" id="Z81363">
    <property type="protein sequence ID" value="CAI42371.1"/>
    <property type="molecule type" value="Genomic_DNA"/>
</dbReference>
<dbReference type="EMBL" id="AL136450">
    <property type="protein sequence ID" value="CAI42371.1"/>
    <property type="status" value="JOINED"/>
    <property type="molecule type" value="Genomic_DNA"/>
</dbReference>
<dbReference type="EMBL" id="CH471107">
    <property type="protein sequence ID" value="EAX11813.1"/>
    <property type="molecule type" value="Genomic_DNA"/>
</dbReference>
<dbReference type="EMBL" id="CH471107">
    <property type="protein sequence ID" value="EAX11814.1"/>
    <property type="molecule type" value="Genomic_DNA"/>
</dbReference>
<dbReference type="EMBL" id="BC017194">
    <property type="protein sequence ID" value="AAH17194.1"/>
    <property type="molecule type" value="mRNA"/>
</dbReference>
<dbReference type="CCDS" id="CCDS14617.1"/>
<dbReference type="RefSeq" id="NP_001120669.1">
    <property type="nucleotide sequence ID" value="NM_001127197.2"/>
</dbReference>
<dbReference type="RefSeq" id="NP_001412.1">
    <property type="nucleotide sequence ID" value="NM_001421.4"/>
</dbReference>
<dbReference type="RefSeq" id="XP_005262446.1">
    <property type="nucleotide sequence ID" value="XM_005262389.4"/>
</dbReference>
<dbReference type="RefSeq" id="XP_047297856.1">
    <property type="nucleotide sequence ID" value="XM_047441900.1"/>
</dbReference>
<dbReference type="RefSeq" id="XP_054182622.1">
    <property type="nucleotide sequence ID" value="XM_054326647.1"/>
</dbReference>
<dbReference type="RefSeq" id="XP_054182623.1">
    <property type="nucleotide sequence ID" value="XM_054326648.1"/>
</dbReference>
<dbReference type="SMR" id="Q99607"/>
<dbReference type="BioGRID" id="108315">
    <property type="interactions" value="112"/>
</dbReference>
<dbReference type="FunCoup" id="Q99607">
    <property type="interactions" value="1633"/>
</dbReference>
<dbReference type="IntAct" id="Q99607">
    <property type="interactions" value="107"/>
</dbReference>
<dbReference type="MINT" id="Q99607"/>
<dbReference type="STRING" id="9606.ENSP00000311280"/>
<dbReference type="GlyGen" id="Q99607">
    <property type="glycosylation" value="3 sites, 1 O-linked glycan (2 sites)"/>
</dbReference>
<dbReference type="iPTMnet" id="Q99607"/>
<dbReference type="PhosphoSitePlus" id="Q99607"/>
<dbReference type="BioMuta" id="ELF4"/>
<dbReference type="DMDM" id="68052244"/>
<dbReference type="jPOST" id="Q99607"/>
<dbReference type="MassIVE" id="Q99607"/>
<dbReference type="PaxDb" id="9606-ENSP00000311280"/>
<dbReference type="PeptideAtlas" id="Q99607"/>
<dbReference type="ProteomicsDB" id="78352"/>
<dbReference type="Pumba" id="Q99607"/>
<dbReference type="Antibodypedia" id="16200">
    <property type="antibodies" value="399 antibodies from 30 providers"/>
</dbReference>
<dbReference type="DNASU" id="2000"/>
<dbReference type="Ensembl" id="ENST00000308167.10">
    <property type="protein sequence ID" value="ENSP00000311280.6"/>
    <property type="gene ID" value="ENSG00000102034.18"/>
</dbReference>
<dbReference type="Ensembl" id="ENST00000335997.11">
    <property type="protein sequence ID" value="ENSP00000338608.7"/>
    <property type="gene ID" value="ENSG00000102034.18"/>
</dbReference>
<dbReference type="GeneID" id="2000"/>
<dbReference type="KEGG" id="hsa:2000"/>
<dbReference type="MANE-Select" id="ENST00000308167.10">
    <property type="protein sequence ID" value="ENSP00000311280.6"/>
    <property type="RefSeq nucleotide sequence ID" value="NM_001421.4"/>
    <property type="RefSeq protein sequence ID" value="NP_001412.1"/>
</dbReference>
<dbReference type="UCSC" id="uc004evd.5">
    <property type="organism name" value="human"/>
</dbReference>
<dbReference type="AGR" id="HGNC:3319"/>
<dbReference type="CTD" id="2000"/>
<dbReference type="DisGeNET" id="2000"/>
<dbReference type="GeneCards" id="ELF4"/>
<dbReference type="HGNC" id="HGNC:3319">
    <property type="gene designation" value="ELF4"/>
</dbReference>
<dbReference type="HPA" id="ENSG00000102034">
    <property type="expression patterns" value="Tissue enhanced (bone)"/>
</dbReference>
<dbReference type="MalaCards" id="ELF4"/>
<dbReference type="MIM" id="300775">
    <property type="type" value="gene"/>
</dbReference>
<dbReference type="MIM" id="301074">
    <property type="type" value="phenotype"/>
</dbReference>
<dbReference type="neXtProt" id="NX_Q99607"/>
<dbReference type="OpenTargets" id="ENSG00000102034"/>
<dbReference type="Orphanet" id="632">
    <property type="disease" value="Short stature due to isolated growth hormone deficiency with X-linked hypogammaglobulinemia"/>
</dbReference>
<dbReference type="Orphanet" id="676125">
    <property type="disease" value="X-linked immune dysregulation with inflammatory bowel disease due to ELF4 deficiency"/>
</dbReference>
<dbReference type="PharmGKB" id="PA27747"/>
<dbReference type="VEuPathDB" id="HostDB:ENSG00000102034"/>
<dbReference type="eggNOG" id="KOG3804">
    <property type="taxonomic scope" value="Eukaryota"/>
</dbReference>
<dbReference type="GeneTree" id="ENSGT00940000161870"/>
<dbReference type="HOGENOM" id="CLU_027279_1_0_1"/>
<dbReference type="InParanoid" id="Q99607"/>
<dbReference type="OMA" id="DDQEGHC"/>
<dbReference type="OrthoDB" id="8196042at2759"/>
<dbReference type="PAN-GO" id="Q99607">
    <property type="GO annotations" value="4 GO annotations based on evolutionary models"/>
</dbReference>
<dbReference type="PhylomeDB" id="Q99607"/>
<dbReference type="TreeFam" id="TF318679"/>
<dbReference type="PathwayCommons" id="Q99607"/>
<dbReference type="SignaLink" id="Q99607"/>
<dbReference type="SIGNOR" id="Q99607"/>
<dbReference type="BioGRID-ORCS" id="2000">
    <property type="hits" value="17 hits in 813 CRISPR screens"/>
</dbReference>
<dbReference type="CD-CODE" id="B5B9A610">
    <property type="entry name" value="PML body"/>
</dbReference>
<dbReference type="ChiTaRS" id="ELF4">
    <property type="organism name" value="human"/>
</dbReference>
<dbReference type="GeneWiki" id="ELF4"/>
<dbReference type="GenomeRNAi" id="2000"/>
<dbReference type="Pharos" id="Q99607">
    <property type="development level" value="Tbio"/>
</dbReference>
<dbReference type="PRO" id="PR:Q99607"/>
<dbReference type="Proteomes" id="UP000005640">
    <property type="component" value="Chromosome X"/>
</dbReference>
<dbReference type="RNAct" id="Q99607">
    <property type="molecule type" value="protein"/>
</dbReference>
<dbReference type="Bgee" id="ENSG00000102034">
    <property type="expression patterns" value="Expressed in endometrium epithelium and 165 other cell types or tissues"/>
</dbReference>
<dbReference type="ExpressionAtlas" id="Q99607">
    <property type="expression patterns" value="baseline and differential"/>
</dbReference>
<dbReference type="GO" id="GO:0000785">
    <property type="term" value="C:chromatin"/>
    <property type="evidence" value="ECO:0000247"/>
    <property type="project" value="NTNU_SB"/>
</dbReference>
<dbReference type="GO" id="GO:0016604">
    <property type="term" value="C:nuclear body"/>
    <property type="evidence" value="ECO:0000314"/>
    <property type="project" value="HPA"/>
</dbReference>
<dbReference type="GO" id="GO:0005654">
    <property type="term" value="C:nucleoplasm"/>
    <property type="evidence" value="ECO:0000314"/>
    <property type="project" value="HPA"/>
</dbReference>
<dbReference type="GO" id="GO:0005634">
    <property type="term" value="C:nucleus"/>
    <property type="evidence" value="ECO:0000318"/>
    <property type="project" value="GO_Central"/>
</dbReference>
<dbReference type="GO" id="GO:0016605">
    <property type="term" value="C:PML body"/>
    <property type="evidence" value="ECO:0000314"/>
    <property type="project" value="UniProtKB"/>
</dbReference>
<dbReference type="GO" id="GO:0001228">
    <property type="term" value="F:DNA-binding transcription activator activity, RNA polymerase II-specific"/>
    <property type="evidence" value="ECO:0000314"/>
    <property type="project" value="NTNU_SB"/>
</dbReference>
<dbReference type="GO" id="GO:0000981">
    <property type="term" value="F:DNA-binding transcription factor activity, RNA polymerase II-specific"/>
    <property type="evidence" value="ECO:0000247"/>
    <property type="project" value="NTNU_SB"/>
</dbReference>
<dbReference type="GO" id="GO:0000978">
    <property type="term" value="F:RNA polymerase II cis-regulatory region sequence-specific DNA binding"/>
    <property type="evidence" value="ECO:0000314"/>
    <property type="project" value="NTNU_SB"/>
</dbReference>
<dbReference type="GO" id="GO:1990837">
    <property type="term" value="F:sequence-specific double-stranded DNA binding"/>
    <property type="evidence" value="ECO:0000314"/>
    <property type="project" value="ARUK-UCL"/>
</dbReference>
<dbReference type="GO" id="GO:0030154">
    <property type="term" value="P:cell differentiation"/>
    <property type="evidence" value="ECO:0000318"/>
    <property type="project" value="GO_Central"/>
</dbReference>
<dbReference type="GO" id="GO:0001787">
    <property type="term" value="P:natural killer cell proliferation"/>
    <property type="evidence" value="ECO:0000250"/>
    <property type="project" value="UniProtKB"/>
</dbReference>
<dbReference type="GO" id="GO:0050728">
    <property type="term" value="P:negative regulation of inflammatory response"/>
    <property type="evidence" value="ECO:0000315"/>
    <property type="project" value="UniProtKB"/>
</dbReference>
<dbReference type="GO" id="GO:0032691">
    <property type="term" value="P:negative regulation of interleukin-1 beta production"/>
    <property type="evidence" value="ECO:0000315"/>
    <property type="project" value="UniProtKB"/>
</dbReference>
<dbReference type="GO" id="GO:0032715">
    <property type="term" value="P:negative regulation of interleukin-6 production"/>
    <property type="evidence" value="ECO:0000315"/>
    <property type="project" value="UniProtKB"/>
</dbReference>
<dbReference type="GO" id="GO:0032720">
    <property type="term" value="P:negative regulation of tumor necrosis factor production"/>
    <property type="evidence" value="ECO:0000315"/>
    <property type="project" value="UniProtKB"/>
</dbReference>
<dbReference type="GO" id="GO:0001866">
    <property type="term" value="P:NK T cell proliferation"/>
    <property type="evidence" value="ECO:0000250"/>
    <property type="project" value="UniProtKB"/>
</dbReference>
<dbReference type="GO" id="GO:0045893">
    <property type="term" value="P:positive regulation of DNA-templated transcription"/>
    <property type="evidence" value="ECO:0000314"/>
    <property type="project" value="UniProtKB"/>
</dbReference>
<dbReference type="GO" id="GO:0045944">
    <property type="term" value="P:positive regulation of transcription by RNA polymerase II"/>
    <property type="evidence" value="ECO:0000314"/>
    <property type="project" value="UniProtKB"/>
</dbReference>
<dbReference type="GO" id="GO:0006357">
    <property type="term" value="P:regulation of transcription by RNA polymerase II"/>
    <property type="evidence" value="ECO:0000318"/>
    <property type="project" value="GO_Central"/>
</dbReference>
<dbReference type="FunFam" id="1.10.10.10:FF:000066">
    <property type="entry name" value="ETS-related transcription factor Elf-2 isoform X1"/>
    <property type="match status" value="1"/>
</dbReference>
<dbReference type="Gene3D" id="1.10.10.10">
    <property type="entry name" value="Winged helix-like DNA-binding domain superfamily/Winged helix DNA-binding domain"/>
    <property type="match status" value="1"/>
</dbReference>
<dbReference type="InterPro" id="IPR000418">
    <property type="entry name" value="Ets_dom"/>
</dbReference>
<dbReference type="InterPro" id="IPR046328">
    <property type="entry name" value="ETS_fam"/>
</dbReference>
<dbReference type="InterPro" id="IPR022084">
    <property type="entry name" value="TF_Elf_N"/>
</dbReference>
<dbReference type="InterPro" id="IPR036388">
    <property type="entry name" value="WH-like_DNA-bd_sf"/>
</dbReference>
<dbReference type="InterPro" id="IPR036390">
    <property type="entry name" value="WH_DNA-bd_sf"/>
</dbReference>
<dbReference type="PANTHER" id="PTHR11849">
    <property type="entry name" value="ETS"/>
    <property type="match status" value="1"/>
</dbReference>
<dbReference type="PANTHER" id="PTHR11849:SF170">
    <property type="entry name" value="ETS-RELATED TRANSCRIPTION FACTOR ELF-4"/>
    <property type="match status" value="1"/>
</dbReference>
<dbReference type="Pfam" id="PF12310">
    <property type="entry name" value="Elf-1_N"/>
    <property type="match status" value="1"/>
</dbReference>
<dbReference type="Pfam" id="PF00178">
    <property type="entry name" value="Ets"/>
    <property type="match status" value="1"/>
</dbReference>
<dbReference type="PRINTS" id="PR00454">
    <property type="entry name" value="ETSDOMAIN"/>
</dbReference>
<dbReference type="SMART" id="SM00413">
    <property type="entry name" value="ETS"/>
    <property type="match status" value="1"/>
</dbReference>
<dbReference type="SUPFAM" id="SSF46785">
    <property type="entry name" value="Winged helix' DNA-binding domain"/>
    <property type="match status" value="1"/>
</dbReference>
<dbReference type="PROSITE" id="PS00345">
    <property type="entry name" value="ETS_DOMAIN_1"/>
    <property type="match status" value="1"/>
</dbReference>
<dbReference type="PROSITE" id="PS00346">
    <property type="entry name" value="ETS_DOMAIN_2"/>
    <property type="match status" value="1"/>
</dbReference>
<dbReference type="PROSITE" id="PS50061">
    <property type="entry name" value="ETS_DOMAIN_3"/>
    <property type="match status" value="1"/>
</dbReference>
<protein>
    <recommendedName>
        <fullName>ETS-related transcription factor Elf-4</fullName>
    </recommendedName>
    <alternativeName>
        <fullName>E74-like factor 4</fullName>
    </alternativeName>
    <alternativeName>
        <fullName>Myeloid Elf-1-like factor</fullName>
    </alternativeName>
</protein>
<comment type="function">
    <text evidence="1 5 6 7 9 10 11 12 13">Transcriptional activator that binds to DNA sequences containing the consensus 5'-WGGA-3'. Transactivates promoters of the hematopoietic growth factor genes CSF2, IL3, IL8, and of the bovine lysozyme gene. Acts synergistically with RUNX1 to transactivate the IL3 promoter (By similarity). Transactivates the PRF1 promoter in natural killer (NK) cells and CD8+ T cells (PubMed:34326534). Plays a role in the development and function of NK and NK T-cells and in innate immunity. Controls the proliferation and homing of CD8+ T-cells via the Kruppel-like factors KLF4 and KLF2 (By similarity). Controls cell senescence in a p53-dependent manner. Can also promote cellular transformation through inhibition of the p16 pathway. Is a transcriptional regulator of inflammation, controlling T-helper 17 (Th17) cells and macrophage inflammatory responses. Required for sustained transcription of anti-inflammatory genes, including IL1RN (PubMed:34326534, PubMed:35266071). Is a negative regulator of pro-inflammatory cytokines expression including IL17A, IL1B, IL6, TNFA and CXCL1 (PubMed:34326534, PubMed:35266071). Down-regulates expression of TREM1, a cell surface receptor involved in the amplification of inflammatory responses (By similarity) (PubMed:34326534, PubMed:35266071).</text>
</comment>
<comment type="subunit">
    <text evidence="5 7">Interacts with RUNX1 (via the Runt domain); the interaction transactivates the IL3 promoter. Interacts (via its C-terminus) with PML; the interaction translocates ELF4 to PML nuclear bodies and enhances transactivation of LYZ.</text>
</comment>
<comment type="subcellular location">
    <subcellularLocation>
        <location evidence="7">Nucleus</location>
        <location evidence="7">PML body</location>
    </subcellularLocation>
    <text>Accumulation into PML nuclear bodies is mediated by PML.</text>
</comment>
<comment type="tissue specificity">
    <text evidence="12 13">Abundantly expressed in the placenta and in a variety of myeloid leukemia cell lines. Moderate levels of expression in heart, lung, spleen, thymus, peripheral blood lymphocytes, ovary and colon. Lower levels of expression in Jurkat T-cells and other T-cell lines and no expression in brain.</text>
</comment>
<comment type="induction">
    <text evidence="6">By ponisterone A in erythroleukemia cells.</text>
</comment>
<comment type="disease">
    <text evidence="8">A chromosomal aberration involving ELF4 has been found in a case of acute myeloid leukemia (AML). Translocation t(X;21)(q25-26;q22) with ERG.</text>
</comment>
<comment type="disease" evidence="10 11">
    <disease id="DI-06377">
        <name>Autoinflammatory syndrome, familial, X-linked, Behcet-like 2</name>
        <acronym>AIFBL2</acronym>
        <description>An X-linked recessive, autoinflammatory disorder characterized by ulceration of the oral mucosa and skin inflammation. Additional variable features may include gastrointestinal ulceration, arthritis, recurrent fevers, and iron deficiency anemia. Disease onset is in early childhood.</description>
        <dbReference type="MIM" id="301074"/>
    </disease>
    <text>The disease is caused by variants affecting the gene represented in this entry.</text>
</comment>
<comment type="similarity">
    <text evidence="2">Belongs to the ETS family.</text>
</comment>
<comment type="sequence caution" evidence="14">
    <conflict type="frameshift">
        <sequence resource="EMBL-CDS" id="AAC17452"/>
    </conflict>
</comment>
<reference evidence="14 15" key="1">
    <citation type="journal article" date="1996" name="Oncogene">
        <title>MEF, a novel transcription factor with an Elf-1 like DNA binding domain but distinct transcriptional activating properties.</title>
        <authorList>
            <person name="Miyazaki Y."/>
            <person name="Sun X."/>
            <person name="Uchida H."/>
            <person name="Zhang J."/>
            <person name="Nimer S."/>
        </authorList>
    </citation>
    <scope>NUCLEOTIDE SEQUENCE [MRNA]</scope>
    <scope>FUNCTION</scope>
    <scope>TISSUE SPECIFICITY</scope>
    <source>
        <tissue evidence="12">Promyelocytic leukemia</tissue>
    </source>
</reference>
<reference evidence="14 16" key="2">
    <citation type="journal article" date="1998" name="Gene">
        <title>Cloning of a novel human ELF-1-related ETS transcription factor, ELFR, its characterization and chromosomal assignment relative to ELF-1.</title>
        <authorList>
            <person name="Aryee D.N.T."/>
            <person name="Petermann R."/>
            <person name="Kos K."/>
            <person name="Henn T."/>
            <person name="Haas O.A."/>
            <person name="Kovar H."/>
        </authorList>
    </citation>
    <scope>NUCLEOTIDE SEQUENCE [MRNA]</scope>
    <scope>FUNCTION</scope>
    <scope>TISSUE SPECIFICITY</scope>
    <source>
        <tissue evidence="13">Ewing sarcoma</tissue>
    </source>
</reference>
<reference evidence="14 18" key="3">
    <citation type="journal article" date="2005" name="Nature">
        <title>The DNA sequence of the human X chromosome.</title>
        <authorList>
            <person name="Ross M.T."/>
            <person name="Grafham D.V."/>
            <person name="Coffey A.J."/>
            <person name="Scherer S."/>
            <person name="McLay K."/>
            <person name="Muzny D."/>
            <person name="Platzer M."/>
            <person name="Howell G.R."/>
            <person name="Burrows C."/>
            <person name="Bird C.P."/>
            <person name="Frankish A."/>
            <person name="Lovell F.L."/>
            <person name="Howe K.L."/>
            <person name="Ashurst J.L."/>
            <person name="Fulton R.S."/>
            <person name="Sudbrak R."/>
            <person name="Wen G."/>
            <person name="Jones M.C."/>
            <person name="Hurles M.E."/>
            <person name="Andrews T.D."/>
            <person name="Scott C.E."/>
            <person name="Searle S."/>
            <person name="Ramser J."/>
            <person name="Whittaker A."/>
            <person name="Deadman R."/>
            <person name="Carter N.P."/>
            <person name="Hunt S.E."/>
            <person name="Chen R."/>
            <person name="Cree A."/>
            <person name="Gunaratne P."/>
            <person name="Havlak P."/>
            <person name="Hodgson A."/>
            <person name="Metzker M.L."/>
            <person name="Richards S."/>
            <person name="Scott G."/>
            <person name="Steffen D."/>
            <person name="Sodergren E."/>
            <person name="Wheeler D.A."/>
            <person name="Worley K.C."/>
            <person name="Ainscough R."/>
            <person name="Ambrose K.D."/>
            <person name="Ansari-Lari M.A."/>
            <person name="Aradhya S."/>
            <person name="Ashwell R.I."/>
            <person name="Babbage A.K."/>
            <person name="Bagguley C.L."/>
            <person name="Ballabio A."/>
            <person name="Banerjee R."/>
            <person name="Barker G.E."/>
            <person name="Barlow K.F."/>
            <person name="Barrett I.P."/>
            <person name="Bates K.N."/>
            <person name="Beare D.M."/>
            <person name="Beasley H."/>
            <person name="Beasley O."/>
            <person name="Beck A."/>
            <person name="Bethel G."/>
            <person name="Blechschmidt K."/>
            <person name="Brady N."/>
            <person name="Bray-Allen S."/>
            <person name="Bridgeman A.M."/>
            <person name="Brown A.J."/>
            <person name="Brown M.J."/>
            <person name="Bonnin D."/>
            <person name="Bruford E.A."/>
            <person name="Buhay C."/>
            <person name="Burch P."/>
            <person name="Burford D."/>
            <person name="Burgess J."/>
            <person name="Burrill W."/>
            <person name="Burton J."/>
            <person name="Bye J.M."/>
            <person name="Carder C."/>
            <person name="Carrel L."/>
            <person name="Chako J."/>
            <person name="Chapman J.C."/>
            <person name="Chavez D."/>
            <person name="Chen E."/>
            <person name="Chen G."/>
            <person name="Chen Y."/>
            <person name="Chen Z."/>
            <person name="Chinault C."/>
            <person name="Ciccodicola A."/>
            <person name="Clark S.Y."/>
            <person name="Clarke G."/>
            <person name="Clee C.M."/>
            <person name="Clegg S."/>
            <person name="Clerc-Blankenburg K."/>
            <person name="Clifford K."/>
            <person name="Cobley V."/>
            <person name="Cole C.G."/>
            <person name="Conquer J.S."/>
            <person name="Corby N."/>
            <person name="Connor R.E."/>
            <person name="David R."/>
            <person name="Davies J."/>
            <person name="Davis C."/>
            <person name="Davis J."/>
            <person name="Delgado O."/>
            <person name="Deshazo D."/>
            <person name="Dhami P."/>
            <person name="Ding Y."/>
            <person name="Dinh H."/>
            <person name="Dodsworth S."/>
            <person name="Draper H."/>
            <person name="Dugan-Rocha S."/>
            <person name="Dunham A."/>
            <person name="Dunn M."/>
            <person name="Durbin K.J."/>
            <person name="Dutta I."/>
            <person name="Eades T."/>
            <person name="Ellwood M."/>
            <person name="Emery-Cohen A."/>
            <person name="Errington H."/>
            <person name="Evans K.L."/>
            <person name="Faulkner L."/>
            <person name="Francis F."/>
            <person name="Frankland J."/>
            <person name="Fraser A.E."/>
            <person name="Galgoczy P."/>
            <person name="Gilbert J."/>
            <person name="Gill R."/>
            <person name="Gloeckner G."/>
            <person name="Gregory S.G."/>
            <person name="Gribble S."/>
            <person name="Griffiths C."/>
            <person name="Grocock R."/>
            <person name="Gu Y."/>
            <person name="Gwilliam R."/>
            <person name="Hamilton C."/>
            <person name="Hart E.A."/>
            <person name="Hawes A."/>
            <person name="Heath P.D."/>
            <person name="Heitmann K."/>
            <person name="Hennig S."/>
            <person name="Hernandez J."/>
            <person name="Hinzmann B."/>
            <person name="Ho S."/>
            <person name="Hoffs M."/>
            <person name="Howden P.J."/>
            <person name="Huckle E.J."/>
            <person name="Hume J."/>
            <person name="Hunt P.J."/>
            <person name="Hunt A.R."/>
            <person name="Isherwood J."/>
            <person name="Jacob L."/>
            <person name="Johnson D."/>
            <person name="Jones S."/>
            <person name="de Jong P.J."/>
            <person name="Joseph S.S."/>
            <person name="Keenan S."/>
            <person name="Kelly S."/>
            <person name="Kershaw J.K."/>
            <person name="Khan Z."/>
            <person name="Kioschis P."/>
            <person name="Klages S."/>
            <person name="Knights A.J."/>
            <person name="Kosiura A."/>
            <person name="Kovar-Smith C."/>
            <person name="Laird G.K."/>
            <person name="Langford C."/>
            <person name="Lawlor S."/>
            <person name="Leversha M."/>
            <person name="Lewis L."/>
            <person name="Liu W."/>
            <person name="Lloyd C."/>
            <person name="Lloyd D.M."/>
            <person name="Loulseged H."/>
            <person name="Loveland J.E."/>
            <person name="Lovell J.D."/>
            <person name="Lozado R."/>
            <person name="Lu J."/>
            <person name="Lyne R."/>
            <person name="Ma J."/>
            <person name="Maheshwari M."/>
            <person name="Matthews L.H."/>
            <person name="McDowall J."/>
            <person name="McLaren S."/>
            <person name="McMurray A."/>
            <person name="Meidl P."/>
            <person name="Meitinger T."/>
            <person name="Milne S."/>
            <person name="Miner G."/>
            <person name="Mistry S.L."/>
            <person name="Morgan M."/>
            <person name="Morris S."/>
            <person name="Mueller I."/>
            <person name="Mullikin J.C."/>
            <person name="Nguyen N."/>
            <person name="Nordsiek G."/>
            <person name="Nyakatura G."/>
            <person name="O'dell C.N."/>
            <person name="Okwuonu G."/>
            <person name="Palmer S."/>
            <person name="Pandian R."/>
            <person name="Parker D."/>
            <person name="Parrish J."/>
            <person name="Pasternak S."/>
            <person name="Patel D."/>
            <person name="Pearce A.V."/>
            <person name="Pearson D.M."/>
            <person name="Pelan S.E."/>
            <person name="Perez L."/>
            <person name="Porter K.M."/>
            <person name="Ramsey Y."/>
            <person name="Reichwald K."/>
            <person name="Rhodes S."/>
            <person name="Ridler K.A."/>
            <person name="Schlessinger D."/>
            <person name="Schueler M.G."/>
            <person name="Sehra H.K."/>
            <person name="Shaw-Smith C."/>
            <person name="Shen H."/>
            <person name="Sheridan E.M."/>
            <person name="Shownkeen R."/>
            <person name="Skuce C.D."/>
            <person name="Smith M.L."/>
            <person name="Sotheran E.C."/>
            <person name="Steingruber H.E."/>
            <person name="Steward C.A."/>
            <person name="Storey R."/>
            <person name="Swann R.M."/>
            <person name="Swarbreck D."/>
            <person name="Tabor P.E."/>
            <person name="Taudien S."/>
            <person name="Taylor T."/>
            <person name="Teague B."/>
            <person name="Thomas K."/>
            <person name="Thorpe A."/>
            <person name="Timms K."/>
            <person name="Tracey A."/>
            <person name="Trevanion S."/>
            <person name="Tromans A.C."/>
            <person name="d'Urso M."/>
            <person name="Verduzco D."/>
            <person name="Villasana D."/>
            <person name="Waldron L."/>
            <person name="Wall M."/>
            <person name="Wang Q."/>
            <person name="Warren J."/>
            <person name="Warry G.L."/>
            <person name="Wei X."/>
            <person name="West A."/>
            <person name="Whitehead S.L."/>
            <person name="Whiteley M.N."/>
            <person name="Wilkinson J.E."/>
            <person name="Willey D.L."/>
            <person name="Williams G."/>
            <person name="Williams L."/>
            <person name="Williamson A."/>
            <person name="Williamson H."/>
            <person name="Wilming L."/>
            <person name="Woodmansey R.L."/>
            <person name="Wray P.W."/>
            <person name="Yen J."/>
            <person name="Zhang J."/>
            <person name="Zhou J."/>
            <person name="Zoghbi H."/>
            <person name="Zorilla S."/>
            <person name="Buck D."/>
            <person name="Reinhardt R."/>
            <person name="Poustka A."/>
            <person name="Rosenthal A."/>
            <person name="Lehrach H."/>
            <person name="Meindl A."/>
            <person name="Minx P.J."/>
            <person name="Hillier L.W."/>
            <person name="Willard H.F."/>
            <person name="Wilson R.K."/>
            <person name="Waterston R.H."/>
            <person name="Rice C.M."/>
            <person name="Vaudin M."/>
            <person name="Coulson A."/>
            <person name="Nelson D.L."/>
            <person name="Weinstock G."/>
            <person name="Sulston J.E."/>
            <person name="Durbin R.M."/>
            <person name="Hubbard T."/>
            <person name="Gibbs R.A."/>
            <person name="Beck S."/>
            <person name="Rogers J."/>
            <person name="Bentley D.R."/>
        </authorList>
    </citation>
    <scope>NUCLEOTIDE SEQUENCE [LARGE SCALE GENOMIC DNA]</scope>
</reference>
<reference key="4">
    <citation type="submission" date="2005-09" db="EMBL/GenBank/DDBJ databases">
        <authorList>
            <person name="Mural R.J."/>
            <person name="Istrail S."/>
            <person name="Sutton G.G."/>
            <person name="Florea L."/>
            <person name="Halpern A.L."/>
            <person name="Mobarry C.M."/>
            <person name="Lippert R."/>
            <person name="Walenz B."/>
            <person name="Shatkay H."/>
            <person name="Dew I."/>
            <person name="Miller J.R."/>
            <person name="Flanigan M.J."/>
            <person name="Edwards N.J."/>
            <person name="Bolanos R."/>
            <person name="Fasulo D."/>
            <person name="Halldorsson B.V."/>
            <person name="Hannenhalli S."/>
            <person name="Turner R."/>
            <person name="Yooseph S."/>
            <person name="Lu F."/>
            <person name="Nusskern D.R."/>
            <person name="Shue B.C."/>
            <person name="Zheng X.H."/>
            <person name="Zhong F."/>
            <person name="Delcher A.L."/>
            <person name="Huson D.H."/>
            <person name="Kravitz S.A."/>
            <person name="Mouchard L."/>
            <person name="Reinert K."/>
            <person name="Remington K.A."/>
            <person name="Clark A.G."/>
            <person name="Waterman M.S."/>
            <person name="Eichler E.E."/>
            <person name="Adams M.D."/>
            <person name="Hunkapiller M.W."/>
            <person name="Myers E.W."/>
            <person name="Venter J.C."/>
        </authorList>
    </citation>
    <scope>NUCLEOTIDE SEQUENCE [LARGE SCALE GENOMIC DNA]</scope>
</reference>
<reference evidence="17" key="5">
    <citation type="journal article" date="2004" name="Genome Res.">
        <title>The status, quality, and expansion of the NIH full-length cDNA project: the Mammalian Gene Collection (MGC).</title>
        <authorList>
            <consortium name="The MGC Project Team"/>
        </authorList>
    </citation>
    <scope>NUCLEOTIDE SEQUENCE [LARGE SCALE MRNA]</scope>
    <source>
        <tissue evidence="17">Placenta</tissue>
    </source>
</reference>
<reference evidence="14" key="6">
    <citation type="journal article" date="1999" name="Mol. Cell. Biol.">
        <title>Functional and physical interactions between AML1 proteins and an ETS protein, MEF: implications for the pathogenesis of t(8;21)-positive leukemias.</title>
        <authorList>
            <person name="Mao S."/>
            <person name="Frank R.C."/>
            <person name="Zhang J."/>
            <person name="Miyazaki Y."/>
            <person name="Nimer S.D."/>
        </authorList>
    </citation>
    <scope>FUNCTION</scope>
    <scope>INTERACTION WITH RUNX1</scope>
</reference>
<reference evidence="14" key="7">
    <citation type="journal article" date="2004" name="J. Biol. Chem.">
        <title>Myeloid ELF1-like factor is a potent activator of interleukin-8 expression in hematopoietic cells.</title>
        <authorList>
            <person name="Hedvat C.V."/>
            <person name="Yao J."/>
            <person name="Sokolic R.A."/>
            <person name="Nimer S.D."/>
        </authorList>
    </citation>
    <scope>FUNCTION</scope>
    <scope>INDUCTION</scope>
</reference>
<reference evidence="14" key="8">
    <citation type="journal article" date="2004" name="J. Biol. Chem.">
        <title>Myeloid Elf-1-like factor, an ETS transcription factor, up-regulates lysozyme transcription in epithelial cells through interaction with promyelocytic leukemia protein.</title>
        <authorList>
            <person name="Suico M.A."/>
            <person name="Yoshida H."/>
            <person name="Seki Y."/>
            <person name="Uchikawa T."/>
            <person name="Lu Z."/>
            <person name="Shuto T."/>
            <person name="Matsuzaki K."/>
            <person name="Nakao M."/>
            <person name="Li J.-D."/>
            <person name="Kai H."/>
        </authorList>
    </citation>
    <scope>FUNCTION</scope>
    <scope>SUBCELLULAR LOCATION</scope>
    <scope>INTERACTION WITH PML</scope>
</reference>
<reference key="9">
    <citation type="journal article" date="2006" name="Leuk. Res.">
        <title>ELF4 is fused to ERG in a case of acute myeloid leukemia with a t(X;21)(q25-26;q22).</title>
        <authorList>
            <person name="Moore S.D."/>
            <person name="Offor O."/>
            <person name="Ferry J.A."/>
            <person name="Amrein P.C."/>
            <person name="Morton C.C."/>
            <person name="Dal Cin P."/>
        </authorList>
    </citation>
    <scope>CHROMOSOMAL TRANSLOCATION WITH ERG</scope>
</reference>
<reference key="10">
    <citation type="journal article" date="2008" name="Proc. Natl. Acad. Sci. U.S.A.">
        <title>A quantitative atlas of mitotic phosphorylation.</title>
        <authorList>
            <person name="Dephoure N."/>
            <person name="Zhou C."/>
            <person name="Villen J."/>
            <person name="Beausoleil S.A."/>
            <person name="Bakalarski C.E."/>
            <person name="Elledge S.J."/>
            <person name="Gygi S.P."/>
        </authorList>
    </citation>
    <scope>PHOSPHORYLATION [LARGE SCALE ANALYSIS] AT SER-151 AND SER-648</scope>
    <scope>IDENTIFICATION BY MASS SPECTROMETRY [LARGE SCALE ANALYSIS]</scope>
    <source>
        <tissue>Cervix carcinoma</tissue>
    </source>
</reference>
<reference key="11">
    <citation type="journal article" date="2009" name="Mol. Cell. Biol.">
        <title>ELF4/MEF activates MDM2 expression and blocks oncogene-induced p16 activation to promote transformation.</title>
        <authorList>
            <person name="Sashida G."/>
            <person name="Liu Y."/>
            <person name="Elf S."/>
            <person name="Miyata Y."/>
            <person name="Ohyashiki K."/>
            <person name="Izumi M."/>
            <person name="Menendez S."/>
            <person name="Nimer S.D."/>
        </authorList>
    </citation>
    <scope>FUNCTION</scope>
</reference>
<reference key="12">
    <citation type="journal article" date="2009" name="Sci. Signal.">
        <title>Quantitative phosphoproteomic analysis of T cell receptor signaling reveals system-wide modulation of protein-protein interactions.</title>
        <authorList>
            <person name="Mayya V."/>
            <person name="Lundgren D.H."/>
            <person name="Hwang S.-I."/>
            <person name="Rezaul K."/>
            <person name="Wu L."/>
            <person name="Eng J.K."/>
            <person name="Rodionov V."/>
            <person name="Han D.K."/>
        </authorList>
    </citation>
    <scope>PHOSPHORYLATION [LARGE SCALE ANALYSIS] AT SER-648</scope>
    <scope>IDENTIFICATION BY MASS SPECTROMETRY [LARGE SCALE ANALYSIS]</scope>
    <source>
        <tissue>Leukemic T-cell</tissue>
    </source>
</reference>
<reference key="13">
    <citation type="journal article" date="2010" name="Sci. Signal.">
        <title>Quantitative phosphoproteomics reveals widespread full phosphorylation site occupancy during mitosis.</title>
        <authorList>
            <person name="Olsen J.V."/>
            <person name="Vermeulen M."/>
            <person name="Santamaria A."/>
            <person name="Kumar C."/>
            <person name="Miller M.L."/>
            <person name="Jensen L.J."/>
            <person name="Gnad F."/>
            <person name="Cox J."/>
            <person name="Jensen T.S."/>
            <person name="Nigg E.A."/>
            <person name="Brunak S."/>
            <person name="Mann M."/>
        </authorList>
    </citation>
    <scope>PHOSPHORYLATION [LARGE SCALE ANALYSIS] AT SER-648</scope>
    <scope>IDENTIFICATION BY MASS SPECTROMETRY [LARGE SCALE ANALYSIS]</scope>
    <source>
        <tissue>Cervix carcinoma</tissue>
    </source>
</reference>
<reference key="14">
    <citation type="journal article" date="2013" name="J. Proteome Res.">
        <title>Toward a comprehensive characterization of a human cancer cell phosphoproteome.</title>
        <authorList>
            <person name="Zhou H."/>
            <person name="Di Palma S."/>
            <person name="Preisinger C."/>
            <person name="Peng M."/>
            <person name="Polat A.N."/>
            <person name="Heck A.J."/>
            <person name="Mohammed S."/>
        </authorList>
    </citation>
    <scope>PHOSPHORYLATION [LARGE SCALE ANALYSIS] AT SER-151; SER-188 AND SER-641</scope>
    <scope>IDENTIFICATION BY MASS SPECTROMETRY [LARGE SCALE ANALYSIS]</scope>
    <source>
        <tissue>Cervix carcinoma</tissue>
        <tissue>Erythroleukemia</tissue>
    </source>
</reference>
<reference key="15">
    <citation type="journal article" date="2021" name="Nat. Immunol.">
        <title>Human autoinflammatory disease reveals ELF4 as a transcriptional regulator of inflammation.</title>
        <authorList>
            <person name="Tyler P.M."/>
            <person name="Bucklin M.L."/>
            <person name="Zhao M."/>
            <person name="Maher T.J."/>
            <person name="Rice A.J."/>
            <person name="Ji W."/>
            <person name="Warner N."/>
            <person name="Pan J."/>
            <person name="Morotti R."/>
            <person name="McCarthy P."/>
            <person name="Griffiths A."/>
            <person name="van Rossum A.M.C."/>
            <person name="Hollink I.H.I.M."/>
            <person name="Dalm V.A.S.H."/>
            <person name="Catanzaro J."/>
            <person name="Lakhani S.A."/>
            <person name="Muise A.M."/>
            <person name="Lucas C.L."/>
        </authorList>
    </citation>
    <scope>VARIANT AIFBL2 SER-251</scope>
    <scope>INVOLVEMENT IN AIFBL2</scope>
    <scope>CHARACTERIZATION OF VARIANT AIFBL2 SER-251</scope>
    <scope>CHARACTERIZATION OF VARIANTS THR-95; VAL-147; LYS-177; ASN-187; THR-345; LEU-368; ILE-382; MET-408; MET-411; VAL-500; LEU-512 AND CYS-604</scope>
    <scope>FUNCTION</scope>
</reference>
<reference key="16">
    <citation type="journal article" date="2022" name="J. Clin. Immunol.">
        <title>Loss of Function Mutation in ELF4 Causes Autoinflammatory and Immunodeficiency Disease in Human.</title>
        <authorList>
            <person name="Sun G."/>
            <person name="Qiu L."/>
            <person name="Yu L."/>
            <person name="An Y."/>
            <person name="Ding Y."/>
            <person name="Zhou L."/>
            <person name="Wu J."/>
            <person name="Yang X."/>
            <person name="Zhang Z."/>
            <person name="Tang X."/>
            <person name="Xia H."/>
            <person name="Cao L."/>
            <person name="You F."/>
            <person name="Zhao X."/>
            <person name="Du H."/>
        </authorList>
    </citation>
    <scope>VARIANT AIFBL2 ARG-231</scope>
    <scope>INVOLVEMENT IN AIFBL2</scope>
    <scope>CHARACTERIZATION OF VARIANT AIFBL2 ARG-231</scope>
    <scope>MUTAGENESIS OF LEU-211; TRP-212; LEU-219; PHE-239; TRP-251; GLY-252; LYS-255 AND MET-260</scope>
    <scope>FUNCTION</scope>
</reference>
<gene>
    <name evidence="18" type="primary">ELF4</name>
    <name evidence="16" type="synonym">ELFR</name>
    <name evidence="15" type="synonym">MEF</name>
</gene>